<accession>Q06RB9</accession>
<evidence type="ECO:0000250" key="1"/>
<evidence type="ECO:0000255" key="2">
    <source>
        <dbReference type="HAMAP-Rule" id="MF_00610"/>
    </source>
</evidence>
<sequence>MQTRKTFSWIKEQIARSISVSLLIYIITRTSISSAYPIFAQQGYENPREATGRIVCANCHLANKPVDVEVPQAVLPDTVFEAVVRIPYDKQLKQVLANGKKGGLNVGAVLILPEGFELAPTDRISPEMKEKIGNLSFQSYRPNKKNILVIGPVPGQKYSEIIFPILSPDPATNKDVHFLKYPIYVGGNRGRGQIYPDGSKSNNTVYNATAAGIVSKIIRKERGGYEISITDPSDGRQVVDIIPPGPELLVSEGESIQFDQPLTSNPNVGGFGQGDAEIVLQDPLRVQGLLFFLASVILAQIFLVLKKKQFEKVQLAEMNF</sequence>
<organism>
    <name type="scientific">Jasminum nudiflorum</name>
    <name type="common">Winter jasmine</name>
    <dbReference type="NCBI Taxonomy" id="126431"/>
    <lineage>
        <taxon>Eukaryota</taxon>
        <taxon>Viridiplantae</taxon>
        <taxon>Streptophyta</taxon>
        <taxon>Embryophyta</taxon>
        <taxon>Tracheophyta</taxon>
        <taxon>Spermatophyta</taxon>
        <taxon>Magnoliopsida</taxon>
        <taxon>eudicotyledons</taxon>
        <taxon>Gunneridae</taxon>
        <taxon>Pentapetalae</taxon>
        <taxon>asterids</taxon>
        <taxon>lamiids</taxon>
        <taxon>Lamiales</taxon>
        <taxon>Oleaceae</taxon>
        <taxon>Jasmineae</taxon>
        <taxon>Jasminum</taxon>
    </lineage>
</organism>
<feature type="signal peptide" evidence="2">
    <location>
        <begin position="1"/>
        <end position="35"/>
    </location>
</feature>
<feature type="chain" id="PRO_0000275421" description="Cytochrome f">
    <location>
        <begin position="36"/>
        <end position="320"/>
    </location>
</feature>
<feature type="transmembrane region" description="Helical" evidence="2">
    <location>
        <begin position="286"/>
        <end position="306"/>
    </location>
</feature>
<feature type="binding site" description="axial binding residue" evidence="2">
    <location>
        <position position="36"/>
    </location>
    <ligand>
        <name>heme</name>
        <dbReference type="ChEBI" id="CHEBI:30413"/>
    </ligand>
    <ligandPart>
        <name>Fe</name>
        <dbReference type="ChEBI" id="CHEBI:18248"/>
    </ligandPart>
</feature>
<feature type="binding site" description="covalent" evidence="2">
    <location>
        <position position="56"/>
    </location>
    <ligand>
        <name>heme</name>
        <dbReference type="ChEBI" id="CHEBI:30413"/>
    </ligand>
</feature>
<feature type="binding site" description="covalent" evidence="2">
    <location>
        <position position="59"/>
    </location>
    <ligand>
        <name>heme</name>
        <dbReference type="ChEBI" id="CHEBI:30413"/>
    </ligand>
</feature>
<feature type="binding site" description="axial binding residue" evidence="2">
    <location>
        <position position="60"/>
    </location>
    <ligand>
        <name>heme</name>
        <dbReference type="ChEBI" id="CHEBI:30413"/>
    </ligand>
    <ligandPart>
        <name>Fe</name>
        <dbReference type="ChEBI" id="CHEBI:18248"/>
    </ligandPart>
</feature>
<reference key="1">
    <citation type="journal article" date="2007" name="Mol. Biol. Evol.">
        <title>Gene relocations within chloroplast genomes of Jasminum and Menodora (Oleaceae) are due to multiple, overlapping inversions.</title>
        <authorList>
            <person name="Lee H.-L."/>
            <person name="Jansen R.K."/>
            <person name="Chumley T.W."/>
            <person name="Kim K.-J."/>
        </authorList>
    </citation>
    <scope>NUCLEOTIDE SEQUENCE [LARGE SCALE GENOMIC DNA]</scope>
</reference>
<dbReference type="EMBL" id="DQ673255">
    <property type="protein sequence ID" value="ABG74640.1"/>
    <property type="molecule type" value="Genomic_DNA"/>
</dbReference>
<dbReference type="RefSeq" id="YP_778502.1">
    <property type="nucleotide sequence ID" value="NC_008407.1"/>
</dbReference>
<dbReference type="SMR" id="Q06RB9"/>
<dbReference type="GeneID" id="4319771"/>
<dbReference type="GO" id="GO:0009535">
    <property type="term" value="C:chloroplast thylakoid membrane"/>
    <property type="evidence" value="ECO:0007669"/>
    <property type="project" value="UniProtKB-SubCell"/>
</dbReference>
<dbReference type="GO" id="GO:0009055">
    <property type="term" value="F:electron transfer activity"/>
    <property type="evidence" value="ECO:0007669"/>
    <property type="project" value="UniProtKB-UniRule"/>
</dbReference>
<dbReference type="GO" id="GO:0020037">
    <property type="term" value="F:heme binding"/>
    <property type="evidence" value="ECO:0007669"/>
    <property type="project" value="InterPro"/>
</dbReference>
<dbReference type="GO" id="GO:0005506">
    <property type="term" value="F:iron ion binding"/>
    <property type="evidence" value="ECO:0007669"/>
    <property type="project" value="InterPro"/>
</dbReference>
<dbReference type="GO" id="GO:0015979">
    <property type="term" value="P:photosynthesis"/>
    <property type="evidence" value="ECO:0007669"/>
    <property type="project" value="UniProtKB-UniRule"/>
</dbReference>
<dbReference type="FunFam" id="1.20.5.700:FF:000001">
    <property type="entry name" value="Cytochrome f"/>
    <property type="match status" value="1"/>
</dbReference>
<dbReference type="FunFam" id="2.40.50.100:FF:000007">
    <property type="entry name" value="Cytochrome f"/>
    <property type="match status" value="1"/>
</dbReference>
<dbReference type="FunFam" id="2.60.40.830:FF:000001">
    <property type="entry name" value="Cytochrome f"/>
    <property type="match status" value="1"/>
</dbReference>
<dbReference type="Gene3D" id="2.40.50.100">
    <property type="match status" value="1"/>
</dbReference>
<dbReference type="Gene3D" id="2.60.40.830">
    <property type="entry name" value="Cytochrome f large domain"/>
    <property type="match status" value="1"/>
</dbReference>
<dbReference type="Gene3D" id="1.20.5.700">
    <property type="entry name" value="Single helix bin"/>
    <property type="match status" value="1"/>
</dbReference>
<dbReference type="HAMAP" id="MF_00610">
    <property type="entry name" value="Cytb6_f_cytF"/>
    <property type="match status" value="1"/>
</dbReference>
<dbReference type="InterPro" id="IPR024058">
    <property type="entry name" value="Cyt-f_TM"/>
</dbReference>
<dbReference type="InterPro" id="IPR002325">
    <property type="entry name" value="Cyt_f"/>
</dbReference>
<dbReference type="InterPro" id="IPR024094">
    <property type="entry name" value="Cyt_f_lg_dom"/>
</dbReference>
<dbReference type="InterPro" id="IPR036826">
    <property type="entry name" value="Cyt_f_lg_dom_sf"/>
</dbReference>
<dbReference type="InterPro" id="IPR011054">
    <property type="entry name" value="Rudment_hybrid_motif"/>
</dbReference>
<dbReference type="PANTHER" id="PTHR33288">
    <property type="match status" value="1"/>
</dbReference>
<dbReference type="PANTHER" id="PTHR33288:SF10">
    <property type="entry name" value="CYTOCHROME F"/>
    <property type="match status" value="1"/>
</dbReference>
<dbReference type="Pfam" id="PF01333">
    <property type="entry name" value="Apocytochr_F_C"/>
    <property type="match status" value="1"/>
</dbReference>
<dbReference type="Pfam" id="PF16639">
    <property type="entry name" value="Apocytochr_F_N"/>
    <property type="match status" value="1"/>
</dbReference>
<dbReference type="PRINTS" id="PR00610">
    <property type="entry name" value="CYTOCHROMEF"/>
</dbReference>
<dbReference type="SUPFAM" id="SSF103431">
    <property type="entry name" value="Cytochrome f subunit of the cytochrome b6f complex, transmembrane anchor"/>
    <property type="match status" value="1"/>
</dbReference>
<dbReference type="SUPFAM" id="SSF49441">
    <property type="entry name" value="Cytochrome f, large domain"/>
    <property type="match status" value="1"/>
</dbReference>
<dbReference type="SUPFAM" id="SSF51246">
    <property type="entry name" value="Rudiment single hybrid motif"/>
    <property type="match status" value="1"/>
</dbReference>
<dbReference type="PROSITE" id="PS51010">
    <property type="entry name" value="CYTF"/>
    <property type="match status" value="1"/>
</dbReference>
<gene>
    <name evidence="2" type="primary">petA</name>
    <name type="ORF">JNC0676</name>
</gene>
<geneLocation type="chloroplast"/>
<protein>
    <recommendedName>
        <fullName evidence="2">Cytochrome f</fullName>
    </recommendedName>
</protein>
<comment type="function">
    <text evidence="2">Component of the cytochrome b6-f complex, which mediates electron transfer between photosystem II (PSII) and photosystem I (PSI), cyclic electron flow around PSI, and state transitions.</text>
</comment>
<comment type="cofactor">
    <cofactor evidence="2">
        <name>heme</name>
        <dbReference type="ChEBI" id="CHEBI:30413"/>
    </cofactor>
    <text evidence="2">Binds 1 heme group covalently.</text>
</comment>
<comment type="subunit">
    <text evidence="1">The 4 large subunits of the cytochrome b6-f complex are cytochrome b6, subunit IV (17 kDa polypeptide, petD), cytochrome f and the Rieske protein, while the 4 small subunits are PetG, PetL, PetM and PetN. The complex functions as a dimer (By similarity).</text>
</comment>
<comment type="subcellular location">
    <subcellularLocation>
        <location evidence="2">Plastid</location>
        <location evidence="2">Chloroplast thylakoid membrane</location>
        <topology evidence="2">Single-pass membrane protein</topology>
    </subcellularLocation>
</comment>
<comment type="similarity">
    <text evidence="2">Belongs to the cytochrome f family.</text>
</comment>
<keyword id="KW-0150">Chloroplast</keyword>
<keyword id="KW-0249">Electron transport</keyword>
<keyword id="KW-0349">Heme</keyword>
<keyword id="KW-0408">Iron</keyword>
<keyword id="KW-0472">Membrane</keyword>
<keyword id="KW-0479">Metal-binding</keyword>
<keyword id="KW-0602">Photosynthesis</keyword>
<keyword id="KW-0934">Plastid</keyword>
<keyword id="KW-0677">Repeat</keyword>
<keyword id="KW-0732">Signal</keyword>
<keyword id="KW-0793">Thylakoid</keyword>
<keyword id="KW-0812">Transmembrane</keyword>
<keyword id="KW-1133">Transmembrane helix</keyword>
<keyword id="KW-0813">Transport</keyword>
<proteinExistence type="inferred from homology"/>
<name>CYF_JASNU</name>